<organism>
    <name type="scientific">Roseobacter denitrificans (strain ATCC 33942 / OCh 114)</name>
    <name type="common">Erythrobacter sp. (strain OCh 114)</name>
    <name type="synonym">Roseobacter denitrificans</name>
    <dbReference type="NCBI Taxonomy" id="375451"/>
    <lineage>
        <taxon>Bacteria</taxon>
        <taxon>Pseudomonadati</taxon>
        <taxon>Pseudomonadota</taxon>
        <taxon>Alphaproteobacteria</taxon>
        <taxon>Rhodobacterales</taxon>
        <taxon>Roseobacteraceae</taxon>
        <taxon>Roseobacter</taxon>
    </lineage>
</organism>
<keyword id="KW-0133">Cell shape</keyword>
<keyword id="KW-0961">Cell wall biogenesis/degradation</keyword>
<keyword id="KW-0413">Isomerase</keyword>
<keyword id="KW-0573">Peptidoglycan synthesis</keyword>
<keyword id="KW-1185">Reference proteome</keyword>
<evidence type="ECO:0000255" key="1">
    <source>
        <dbReference type="HAMAP-Rule" id="MF_00258"/>
    </source>
</evidence>
<gene>
    <name evidence="1" type="primary">murI</name>
    <name type="ordered locus">RD1_3228</name>
</gene>
<feature type="chain" id="PRO_1000078568" description="Glutamate racemase">
    <location>
        <begin position="1"/>
        <end position="269"/>
    </location>
</feature>
<feature type="active site" description="Proton donor/acceptor" evidence="1">
    <location>
        <position position="70"/>
    </location>
</feature>
<feature type="active site" description="Proton donor/acceptor" evidence="1">
    <location>
        <position position="194"/>
    </location>
</feature>
<feature type="binding site" evidence="1">
    <location>
        <begin position="7"/>
        <end position="8"/>
    </location>
    <ligand>
        <name>substrate</name>
    </ligand>
</feature>
<feature type="binding site" evidence="1">
    <location>
        <begin position="39"/>
        <end position="40"/>
    </location>
    <ligand>
        <name>substrate</name>
    </ligand>
</feature>
<feature type="binding site" evidence="1">
    <location>
        <begin position="71"/>
        <end position="72"/>
    </location>
    <ligand>
        <name>substrate</name>
    </ligand>
</feature>
<feature type="binding site" evidence="1">
    <location>
        <begin position="195"/>
        <end position="196"/>
    </location>
    <ligand>
        <name>substrate</name>
    </ligand>
</feature>
<proteinExistence type="inferred from homology"/>
<name>MURI_ROSDO</name>
<protein>
    <recommendedName>
        <fullName evidence="1">Glutamate racemase</fullName>
        <ecNumber evidence="1">5.1.1.3</ecNumber>
    </recommendedName>
</protein>
<sequence length="269" mass="29141">MSVGIFDSGLGGLTVLDAVQTRLPDMPFAYLADSAHAPYGVRTADDIYDLTCQSVARLFDAGCNLVILACNTASAAALRRMQESWVPEDKRVLGVFVPLIEAMTERQWGDNSPPREVGVKHVALFATPATVASRAFQRELAFRAIGVDVEAQACGGVVDAIEDGDMMLAEALVRSHVEALQRKMPTPDAAILGCTHYPLMQDIFQKALGENVRVFSQANLVADSLADYLERHPGMRGTGSPVFLTTGDPARVSDRATQFLRRRIEFSAA</sequence>
<accession>Q163W3</accession>
<reference key="1">
    <citation type="journal article" date="2007" name="J. Bacteriol.">
        <title>The complete genome sequence of Roseobacter denitrificans reveals a mixotrophic rather than photosynthetic metabolism.</title>
        <authorList>
            <person name="Swingley W.D."/>
            <person name="Sadekar S."/>
            <person name="Mastrian S.D."/>
            <person name="Matthies H.J."/>
            <person name="Hao J."/>
            <person name="Ramos H."/>
            <person name="Acharya C.R."/>
            <person name="Conrad A.L."/>
            <person name="Taylor H.L."/>
            <person name="Dejesa L.C."/>
            <person name="Shah M.K."/>
            <person name="O'Huallachain M.E."/>
            <person name="Lince M.T."/>
            <person name="Blankenship R.E."/>
            <person name="Beatty J.T."/>
            <person name="Touchman J.W."/>
        </authorList>
    </citation>
    <scope>NUCLEOTIDE SEQUENCE [LARGE SCALE GENOMIC DNA]</scope>
    <source>
        <strain>ATCC 33942 / OCh 114</strain>
    </source>
</reference>
<dbReference type="EC" id="5.1.1.3" evidence="1"/>
<dbReference type="EMBL" id="CP000362">
    <property type="protein sequence ID" value="ABG32730.1"/>
    <property type="molecule type" value="Genomic_DNA"/>
</dbReference>
<dbReference type="RefSeq" id="WP_011569346.1">
    <property type="nucleotide sequence ID" value="NC_008209.1"/>
</dbReference>
<dbReference type="SMR" id="Q163W3"/>
<dbReference type="STRING" id="375451.RD1_3228"/>
<dbReference type="KEGG" id="rde:RD1_3228"/>
<dbReference type="eggNOG" id="COG0796">
    <property type="taxonomic scope" value="Bacteria"/>
</dbReference>
<dbReference type="HOGENOM" id="CLU_052344_0_3_5"/>
<dbReference type="OrthoDB" id="9801055at2"/>
<dbReference type="UniPathway" id="UPA00219"/>
<dbReference type="Proteomes" id="UP000007029">
    <property type="component" value="Chromosome"/>
</dbReference>
<dbReference type="GO" id="GO:0008881">
    <property type="term" value="F:glutamate racemase activity"/>
    <property type="evidence" value="ECO:0007669"/>
    <property type="project" value="UniProtKB-UniRule"/>
</dbReference>
<dbReference type="GO" id="GO:0071555">
    <property type="term" value="P:cell wall organization"/>
    <property type="evidence" value="ECO:0007669"/>
    <property type="project" value="UniProtKB-KW"/>
</dbReference>
<dbReference type="GO" id="GO:0009252">
    <property type="term" value="P:peptidoglycan biosynthetic process"/>
    <property type="evidence" value="ECO:0007669"/>
    <property type="project" value="UniProtKB-UniRule"/>
</dbReference>
<dbReference type="GO" id="GO:0008360">
    <property type="term" value="P:regulation of cell shape"/>
    <property type="evidence" value="ECO:0007669"/>
    <property type="project" value="UniProtKB-KW"/>
</dbReference>
<dbReference type="Gene3D" id="3.40.50.1860">
    <property type="match status" value="2"/>
</dbReference>
<dbReference type="HAMAP" id="MF_00258">
    <property type="entry name" value="Glu_racemase"/>
    <property type="match status" value="1"/>
</dbReference>
<dbReference type="InterPro" id="IPR015942">
    <property type="entry name" value="Asp/Glu/hydantoin_racemase"/>
</dbReference>
<dbReference type="InterPro" id="IPR001920">
    <property type="entry name" value="Asp/Glu_race"/>
</dbReference>
<dbReference type="InterPro" id="IPR018187">
    <property type="entry name" value="Asp/Glu_racemase_AS_1"/>
</dbReference>
<dbReference type="InterPro" id="IPR004391">
    <property type="entry name" value="Glu_race"/>
</dbReference>
<dbReference type="PANTHER" id="PTHR21198">
    <property type="entry name" value="GLUTAMATE RACEMASE"/>
    <property type="match status" value="1"/>
</dbReference>
<dbReference type="PANTHER" id="PTHR21198:SF2">
    <property type="entry name" value="GLUTAMATE RACEMASE"/>
    <property type="match status" value="1"/>
</dbReference>
<dbReference type="Pfam" id="PF01177">
    <property type="entry name" value="Asp_Glu_race"/>
    <property type="match status" value="1"/>
</dbReference>
<dbReference type="SUPFAM" id="SSF53681">
    <property type="entry name" value="Aspartate/glutamate racemase"/>
    <property type="match status" value="2"/>
</dbReference>
<dbReference type="PROSITE" id="PS00923">
    <property type="entry name" value="ASP_GLU_RACEMASE_1"/>
    <property type="match status" value="1"/>
</dbReference>
<comment type="function">
    <text evidence="1">Provides the (R)-glutamate required for cell wall biosynthesis.</text>
</comment>
<comment type="catalytic activity">
    <reaction evidence="1">
        <text>L-glutamate = D-glutamate</text>
        <dbReference type="Rhea" id="RHEA:12813"/>
        <dbReference type="ChEBI" id="CHEBI:29985"/>
        <dbReference type="ChEBI" id="CHEBI:29986"/>
        <dbReference type="EC" id="5.1.1.3"/>
    </reaction>
</comment>
<comment type="pathway">
    <text evidence="1">Cell wall biogenesis; peptidoglycan biosynthesis.</text>
</comment>
<comment type="similarity">
    <text evidence="1">Belongs to the aspartate/glutamate racemases family.</text>
</comment>